<proteinExistence type="inferred from homology"/>
<protein>
    <recommendedName>
        <fullName evidence="1">Large ribosomal subunit protein bL27</fullName>
    </recommendedName>
    <alternativeName>
        <fullName evidence="3">50S ribosomal protein L27</fullName>
    </alternativeName>
</protein>
<organism>
    <name type="scientific">Leptospira borgpetersenii serovar Hardjo-bovis (strain JB197)</name>
    <dbReference type="NCBI Taxonomy" id="355277"/>
    <lineage>
        <taxon>Bacteria</taxon>
        <taxon>Pseudomonadati</taxon>
        <taxon>Spirochaetota</taxon>
        <taxon>Spirochaetia</taxon>
        <taxon>Leptospirales</taxon>
        <taxon>Leptospiraceae</taxon>
        <taxon>Leptospira</taxon>
    </lineage>
</organism>
<reference key="1">
    <citation type="journal article" date="2006" name="Proc. Natl. Acad. Sci. U.S.A.">
        <title>Genome reduction in Leptospira borgpetersenii reflects limited transmission potential.</title>
        <authorList>
            <person name="Bulach D.M."/>
            <person name="Zuerner R.L."/>
            <person name="Wilson P."/>
            <person name="Seemann T."/>
            <person name="McGrath A."/>
            <person name="Cullen P.A."/>
            <person name="Davis J."/>
            <person name="Johnson M."/>
            <person name="Kuczek E."/>
            <person name="Alt D.P."/>
            <person name="Peterson-Burch B."/>
            <person name="Coppel R.L."/>
            <person name="Rood J.I."/>
            <person name="Davies J.K."/>
            <person name="Adler B."/>
        </authorList>
    </citation>
    <scope>NUCLEOTIDE SEQUENCE [LARGE SCALE GENOMIC DNA]</scope>
    <source>
        <strain>JB197</strain>
    </source>
</reference>
<accession>Q04Q89</accession>
<dbReference type="EMBL" id="CP000350">
    <property type="protein sequence ID" value="ABJ76931.1"/>
    <property type="molecule type" value="Genomic_DNA"/>
</dbReference>
<dbReference type="RefSeq" id="WP_000940600.1">
    <property type="nucleotide sequence ID" value="NC_008510.1"/>
</dbReference>
<dbReference type="SMR" id="Q04Q89"/>
<dbReference type="GeneID" id="61173119"/>
<dbReference type="KEGG" id="lbj:LBJ_2493"/>
<dbReference type="HOGENOM" id="CLU_095424_4_1_12"/>
<dbReference type="Proteomes" id="UP000000656">
    <property type="component" value="Chromosome 1"/>
</dbReference>
<dbReference type="GO" id="GO:0022625">
    <property type="term" value="C:cytosolic large ribosomal subunit"/>
    <property type="evidence" value="ECO:0007669"/>
    <property type="project" value="TreeGrafter"/>
</dbReference>
<dbReference type="GO" id="GO:0003735">
    <property type="term" value="F:structural constituent of ribosome"/>
    <property type="evidence" value="ECO:0007669"/>
    <property type="project" value="InterPro"/>
</dbReference>
<dbReference type="GO" id="GO:0006412">
    <property type="term" value="P:translation"/>
    <property type="evidence" value="ECO:0007669"/>
    <property type="project" value="UniProtKB-UniRule"/>
</dbReference>
<dbReference type="FunFam" id="2.40.50.100:FF:000001">
    <property type="entry name" value="50S ribosomal protein L27"/>
    <property type="match status" value="1"/>
</dbReference>
<dbReference type="Gene3D" id="2.40.50.100">
    <property type="match status" value="1"/>
</dbReference>
<dbReference type="HAMAP" id="MF_00539">
    <property type="entry name" value="Ribosomal_bL27"/>
    <property type="match status" value="1"/>
</dbReference>
<dbReference type="InterPro" id="IPR001684">
    <property type="entry name" value="Ribosomal_bL27"/>
</dbReference>
<dbReference type="InterPro" id="IPR018261">
    <property type="entry name" value="Ribosomal_bL27_CS"/>
</dbReference>
<dbReference type="NCBIfam" id="TIGR00062">
    <property type="entry name" value="L27"/>
    <property type="match status" value="1"/>
</dbReference>
<dbReference type="PANTHER" id="PTHR15893:SF0">
    <property type="entry name" value="LARGE RIBOSOMAL SUBUNIT PROTEIN BL27M"/>
    <property type="match status" value="1"/>
</dbReference>
<dbReference type="PANTHER" id="PTHR15893">
    <property type="entry name" value="RIBOSOMAL PROTEIN L27"/>
    <property type="match status" value="1"/>
</dbReference>
<dbReference type="Pfam" id="PF01016">
    <property type="entry name" value="Ribosomal_L27"/>
    <property type="match status" value="1"/>
</dbReference>
<dbReference type="PRINTS" id="PR00063">
    <property type="entry name" value="RIBOSOMALL27"/>
</dbReference>
<dbReference type="SUPFAM" id="SSF110324">
    <property type="entry name" value="Ribosomal L27 protein-like"/>
    <property type="match status" value="1"/>
</dbReference>
<dbReference type="PROSITE" id="PS00831">
    <property type="entry name" value="RIBOSOMAL_L27"/>
    <property type="match status" value="1"/>
</dbReference>
<sequence>MAHKKGGGSSKNGRDSNSQRLGVKRFGGESVLAGNILVRQRGTKFRPGNNVGLGKDHTLFALVTGKVKFEMVTKLKMQVSVYPE</sequence>
<keyword id="KW-0687">Ribonucleoprotein</keyword>
<keyword id="KW-0689">Ribosomal protein</keyword>
<gene>
    <name evidence="1" type="primary">rpmA</name>
    <name type="ordered locus">LBJ_2493</name>
</gene>
<name>RL27_LEPBJ</name>
<comment type="similarity">
    <text evidence="1">Belongs to the bacterial ribosomal protein bL27 family.</text>
</comment>
<feature type="chain" id="PRO_1000017506" description="Large ribosomal subunit protein bL27">
    <location>
        <begin position="1"/>
        <end position="84"/>
    </location>
</feature>
<feature type="region of interest" description="Disordered" evidence="2">
    <location>
        <begin position="1"/>
        <end position="24"/>
    </location>
</feature>
<evidence type="ECO:0000255" key="1">
    <source>
        <dbReference type="HAMAP-Rule" id="MF_00539"/>
    </source>
</evidence>
<evidence type="ECO:0000256" key="2">
    <source>
        <dbReference type="SAM" id="MobiDB-lite"/>
    </source>
</evidence>
<evidence type="ECO:0000305" key="3"/>